<gene>
    <name evidence="1" type="primary">nuoB</name>
    <name type="ordered locus">plu3088</name>
</gene>
<proteinExistence type="inferred from homology"/>
<reference key="1">
    <citation type="journal article" date="2003" name="Nat. Biotechnol.">
        <title>The genome sequence of the entomopathogenic bacterium Photorhabdus luminescens.</title>
        <authorList>
            <person name="Duchaud E."/>
            <person name="Rusniok C."/>
            <person name="Frangeul L."/>
            <person name="Buchrieser C."/>
            <person name="Givaudan A."/>
            <person name="Taourit S."/>
            <person name="Bocs S."/>
            <person name="Boursaux-Eude C."/>
            <person name="Chandler M."/>
            <person name="Charles J.-F."/>
            <person name="Dassa E."/>
            <person name="Derose R."/>
            <person name="Derzelle S."/>
            <person name="Freyssinet G."/>
            <person name="Gaudriault S."/>
            <person name="Medigue C."/>
            <person name="Lanois A."/>
            <person name="Powell K."/>
            <person name="Siguier P."/>
            <person name="Vincent R."/>
            <person name="Wingate V."/>
            <person name="Zouine M."/>
            <person name="Glaser P."/>
            <person name="Boemare N."/>
            <person name="Danchin A."/>
            <person name="Kunst F."/>
        </authorList>
    </citation>
    <scope>NUCLEOTIDE SEQUENCE [LARGE SCALE GENOMIC DNA]</scope>
    <source>
        <strain>DSM 15139 / CIP 105565 / TT01</strain>
    </source>
</reference>
<organism>
    <name type="scientific">Photorhabdus laumondii subsp. laumondii (strain DSM 15139 / CIP 105565 / TT01)</name>
    <name type="common">Photorhabdus luminescens subsp. laumondii</name>
    <dbReference type="NCBI Taxonomy" id="243265"/>
    <lineage>
        <taxon>Bacteria</taxon>
        <taxon>Pseudomonadati</taxon>
        <taxon>Pseudomonadota</taxon>
        <taxon>Gammaproteobacteria</taxon>
        <taxon>Enterobacterales</taxon>
        <taxon>Morganellaceae</taxon>
        <taxon>Photorhabdus</taxon>
    </lineage>
</organism>
<protein>
    <recommendedName>
        <fullName evidence="1">NADH-quinone oxidoreductase subunit B</fullName>
        <ecNumber evidence="1">7.1.1.-</ecNumber>
    </recommendedName>
    <alternativeName>
        <fullName evidence="1">NADH dehydrogenase I subunit B</fullName>
    </alternativeName>
    <alternativeName>
        <fullName evidence="1">NDH-1 subunit B</fullName>
    </alternativeName>
</protein>
<name>NUOB_PHOLL</name>
<sequence length="224" mass="25529">MDYTLTRIDPNGENDRYPLQKQEIVADPLEQHVHRSVYMGKLEHALHDMVNWGRKNSLWPYNFGLSCCYVEMATSFTAVHDVARFGAEVLRASPRQADFMVVAGTCFTKMAPVIQRLYDQMLEPKWVISMGACANSGGMYDIYSVVQGVDKFIPVDVYIPGCPPRPEAYMQALLLLQESIGKERRPLSWVVGDQGVYRANMQSERERKHGERIAVKNLRTPDEV</sequence>
<feature type="chain" id="PRO_0000376302" description="NADH-quinone oxidoreductase subunit B">
    <location>
        <begin position="1"/>
        <end position="224"/>
    </location>
</feature>
<feature type="binding site" evidence="1">
    <location>
        <position position="67"/>
    </location>
    <ligand>
        <name>[4Fe-4S] cluster</name>
        <dbReference type="ChEBI" id="CHEBI:49883"/>
    </ligand>
</feature>
<feature type="binding site" evidence="1">
    <location>
        <position position="68"/>
    </location>
    <ligand>
        <name>[4Fe-4S] cluster</name>
        <dbReference type="ChEBI" id="CHEBI:49883"/>
    </ligand>
</feature>
<feature type="binding site" evidence="1">
    <location>
        <position position="133"/>
    </location>
    <ligand>
        <name>[4Fe-4S] cluster</name>
        <dbReference type="ChEBI" id="CHEBI:49883"/>
    </ligand>
</feature>
<feature type="binding site" evidence="1">
    <location>
        <position position="162"/>
    </location>
    <ligand>
        <name>[4Fe-4S] cluster</name>
        <dbReference type="ChEBI" id="CHEBI:49883"/>
    </ligand>
</feature>
<dbReference type="EC" id="7.1.1.-" evidence="1"/>
<dbReference type="EMBL" id="BX571869">
    <property type="protein sequence ID" value="CAE15462.1"/>
    <property type="molecule type" value="Genomic_DNA"/>
</dbReference>
<dbReference type="RefSeq" id="WP_011147305.1">
    <property type="nucleotide sequence ID" value="NC_005126.1"/>
</dbReference>
<dbReference type="SMR" id="Q7N2I8"/>
<dbReference type="STRING" id="243265.plu3088"/>
<dbReference type="KEGG" id="plu:plu3088"/>
<dbReference type="eggNOG" id="COG0377">
    <property type="taxonomic scope" value="Bacteria"/>
</dbReference>
<dbReference type="HOGENOM" id="CLU_055737_7_3_6"/>
<dbReference type="OrthoDB" id="9786737at2"/>
<dbReference type="Proteomes" id="UP000002514">
    <property type="component" value="Chromosome"/>
</dbReference>
<dbReference type="GO" id="GO:0005886">
    <property type="term" value="C:plasma membrane"/>
    <property type="evidence" value="ECO:0007669"/>
    <property type="project" value="UniProtKB-SubCell"/>
</dbReference>
<dbReference type="GO" id="GO:0045271">
    <property type="term" value="C:respiratory chain complex I"/>
    <property type="evidence" value="ECO:0007669"/>
    <property type="project" value="TreeGrafter"/>
</dbReference>
<dbReference type="GO" id="GO:0051539">
    <property type="term" value="F:4 iron, 4 sulfur cluster binding"/>
    <property type="evidence" value="ECO:0007669"/>
    <property type="project" value="UniProtKB-KW"/>
</dbReference>
<dbReference type="GO" id="GO:0005506">
    <property type="term" value="F:iron ion binding"/>
    <property type="evidence" value="ECO:0007669"/>
    <property type="project" value="UniProtKB-UniRule"/>
</dbReference>
<dbReference type="GO" id="GO:0008137">
    <property type="term" value="F:NADH dehydrogenase (ubiquinone) activity"/>
    <property type="evidence" value="ECO:0007669"/>
    <property type="project" value="InterPro"/>
</dbReference>
<dbReference type="GO" id="GO:0050136">
    <property type="term" value="F:NADH:ubiquinone reductase (non-electrogenic) activity"/>
    <property type="evidence" value="ECO:0007669"/>
    <property type="project" value="UniProtKB-UniRule"/>
</dbReference>
<dbReference type="GO" id="GO:0048038">
    <property type="term" value="F:quinone binding"/>
    <property type="evidence" value="ECO:0007669"/>
    <property type="project" value="UniProtKB-KW"/>
</dbReference>
<dbReference type="GO" id="GO:0009060">
    <property type="term" value="P:aerobic respiration"/>
    <property type="evidence" value="ECO:0007669"/>
    <property type="project" value="TreeGrafter"/>
</dbReference>
<dbReference type="GO" id="GO:0015990">
    <property type="term" value="P:electron transport coupled proton transport"/>
    <property type="evidence" value="ECO:0007669"/>
    <property type="project" value="TreeGrafter"/>
</dbReference>
<dbReference type="FunFam" id="3.40.50.12280:FF:000002">
    <property type="entry name" value="NADH-quinone oxidoreductase subunit B"/>
    <property type="match status" value="1"/>
</dbReference>
<dbReference type="Gene3D" id="3.40.50.12280">
    <property type="match status" value="1"/>
</dbReference>
<dbReference type="HAMAP" id="MF_01356">
    <property type="entry name" value="NDH1_NuoB"/>
    <property type="match status" value="1"/>
</dbReference>
<dbReference type="InterPro" id="IPR006137">
    <property type="entry name" value="NADH_UbQ_OxRdtase-like_20kDa"/>
</dbReference>
<dbReference type="InterPro" id="IPR006138">
    <property type="entry name" value="NADH_UQ_OxRdtase_20Kd_su"/>
</dbReference>
<dbReference type="NCBIfam" id="TIGR01957">
    <property type="entry name" value="nuoB_fam"/>
    <property type="match status" value="1"/>
</dbReference>
<dbReference type="NCBIfam" id="NF005012">
    <property type="entry name" value="PRK06411.1"/>
    <property type="match status" value="1"/>
</dbReference>
<dbReference type="PANTHER" id="PTHR11995">
    <property type="entry name" value="NADH DEHYDROGENASE"/>
    <property type="match status" value="1"/>
</dbReference>
<dbReference type="PANTHER" id="PTHR11995:SF14">
    <property type="entry name" value="NADH DEHYDROGENASE [UBIQUINONE] IRON-SULFUR PROTEIN 7, MITOCHONDRIAL"/>
    <property type="match status" value="1"/>
</dbReference>
<dbReference type="Pfam" id="PF01058">
    <property type="entry name" value="Oxidored_q6"/>
    <property type="match status" value="1"/>
</dbReference>
<dbReference type="SUPFAM" id="SSF56770">
    <property type="entry name" value="HydA/Nqo6-like"/>
    <property type="match status" value="1"/>
</dbReference>
<dbReference type="PROSITE" id="PS01150">
    <property type="entry name" value="COMPLEX1_20K"/>
    <property type="match status" value="1"/>
</dbReference>
<comment type="function">
    <text evidence="1">NDH-1 shuttles electrons from NADH, via FMN and iron-sulfur (Fe-S) centers, to quinones in the respiratory chain. The immediate electron acceptor for the enzyme in this species is believed to be ubiquinone. Couples the redox reaction to proton translocation (for every two electrons transferred, four hydrogen ions are translocated across the cytoplasmic membrane), and thus conserves the redox energy in a proton gradient.</text>
</comment>
<comment type="catalytic activity">
    <reaction evidence="1">
        <text>a quinone + NADH + 5 H(+)(in) = a quinol + NAD(+) + 4 H(+)(out)</text>
        <dbReference type="Rhea" id="RHEA:57888"/>
        <dbReference type="ChEBI" id="CHEBI:15378"/>
        <dbReference type="ChEBI" id="CHEBI:24646"/>
        <dbReference type="ChEBI" id="CHEBI:57540"/>
        <dbReference type="ChEBI" id="CHEBI:57945"/>
        <dbReference type="ChEBI" id="CHEBI:132124"/>
    </reaction>
</comment>
<comment type="cofactor">
    <cofactor evidence="1">
        <name>[4Fe-4S] cluster</name>
        <dbReference type="ChEBI" id="CHEBI:49883"/>
    </cofactor>
    <text evidence="1">Binds 1 [4Fe-4S] cluster.</text>
</comment>
<comment type="subunit">
    <text evidence="1">NDH-1 is composed of 13 different subunits. Subunits NuoB, CD, E, F, and G constitute the peripheral sector of the complex.</text>
</comment>
<comment type="subcellular location">
    <subcellularLocation>
        <location evidence="1">Cell inner membrane</location>
        <topology evidence="1">Peripheral membrane protein</topology>
        <orientation evidence="1">Cytoplasmic side</orientation>
    </subcellularLocation>
</comment>
<comment type="similarity">
    <text evidence="1">Belongs to the complex I 20 kDa subunit family.</text>
</comment>
<keyword id="KW-0004">4Fe-4S</keyword>
<keyword id="KW-0997">Cell inner membrane</keyword>
<keyword id="KW-1003">Cell membrane</keyword>
<keyword id="KW-0408">Iron</keyword>
<keyword id="KW-0411">Iron-sulfur</keyword>
<keyword id="KW-0472">Membrane</keyword>
<keyword id="KW-0479">Metal-binding</keyword>
<keyword id="KW-0520">NAD</keyword>
<keyword id="KW-0874">Quinone</keyword>
<keyword id="KW-1185">Reference proteome</keyword>
<keyword id="KW-1278">Translocase</keyword>
<keyword id="KW-0813">Transport</keyword>
<keyword id="KW-0830">Ubiquinone</keyword>
<accession>Q7N2I8</accession>
<evidence type="ECO:0000255" key="1">
    <source>
        <dbReference type="HAMAP-Rule" id="MF_01356"/>
    </source>
</evidence>